<evidence type="ECO:0000255" key="1"/>
<evidence type="ECO:0000255" key="2">
    <source>
        <dbReference type="PROSITE-ProRule" id="PRU00041"/>
    </source>
</evidence>
<evidence type="ECO:0000269" key="3">
    <source>
    </source>
</evidence>
<evidence type="ECO:0000269" key="4">
    <source>
    </source>
</evidence>
<evidence type="ECO:0000269" key="5">
    <source>
    </source>
</evidence>
<evidence type="ECO:0000269" key="6">
    <source>
    </source>
</evidence>
<evidence type="ECO:0000269" key="7">
    <source>
    </source>
</evidence>
<evidence type="ECO:0000269" key="8">
    <source>
    </source>
</evidence>
<evidence type="ECO:0000303" key="9">
    <source>
    </source>
</evidence>
<evidence type="ECO:0000305" key="10"/>
<comment type="function">
    <text evidence="4 5 7">Involved in the trafficking and exocytosis of secretory vesicles in non-neuronal tissues. Mediates Ca(2+)-regulation of exocytosis acrosomal reaction in sperm. May mediate Ca(2+)-regulation of exocytosis in insulin secreted cells.</text>
</comment>
<comment type="subunit">
    <text evidence="3 5 7 8">Homodimer or homooligomer. Homodimerization and homooligomerization do not depend on Ca(2+). Interacts with SYNCRIP isoform 2 C-terminus. Binds inositol 1,3,4,5-tetrakisphosphate (IP4). Binds to AP2 in a Ca(2+)-independent manner. Interacts with STX1A, STX1B and STX2; the interaction is Ca(2+)-dependent.</text>
</comment>
<comment type="subcellular location">
    <subcellularLocation>
        <location>Cytoplasm</location>
    </subcellularLocation>
    <subcellularLocation>
        <location>Cell membrane</location>
        <topology>Single-pass type III membrane protein</topology>
    </subcellularLocation>
    <subcellularLocation>
        <location evidence="4">Cytoplasmic vesicle</location>
        <location evidence="4">Secretory vesicle</location>
        <location evidence="4">Acrosome</location>
    </subcellularLocation>
</comment>
<comment type="alternative products">
    <event type="alternative splicing"/>
    <isoform>
        <id>Q9R0N6-1</id>
        <name>1</name>
        <sequence type="displayed"/>
    </isoform>
    <isoform>
        <id>Q9R0N6-2</id>
        <name>2</name>
        <sequence type="described" ref="VSP_009028 VSP_009029"/>
    </isoform>
</comment>
<comment type="tissue specificity">
    <text evidence="4 6">Ubiquitous. Detected in testis and brain. Expressed in primary neurons, neuroendocrine and endocrine cells.</text>
</comment>
<comment type="domain">
    <text>The first C2 domain/C2A does not mediate Ca(2+)-dependent phospholipid binding.</text>
</comment>
<comment type="domain">
    <text>The second C2 domain/C2B is responsible for SYNCRIP and inositol 1,3,4,5-tetrakisphosphate (IP4)-binding.</text>
</comment>
<comment type="miscellaneous">
    <molecule>Isoform 2</molecule>
    <text evidence="10">May be due to competing donor and acceptor splice sites.</text>
</comment>
<comment type="similarity">
    <text evidence="10">Belongs to the synaptotagmin family.</text>
</comment>
<reference key="1">
    <citation type="journal article" date="1999" name="J. Biol. Chem.">
        <title>Conserved N-terminal cysteine motif is essential for homo- and heterodimer formation of synaptotagmins III, V, VI, and X.</title>
        <authorList>
            <person name="Fukuda M."/>
            <person name="Kanno E."/>
            <person name="Mikoshiba K."/>
        </authorList>
    </citation>
    <scope>NUCLEOTIDE SEQUENCE [MRNA] (ISOFORM 1)</scope>
    <source>
        <strain>ICR</strain>
        <tissue>Cerebellum</tissue>
    </source>
</reference>
<reference key="2">
    <citation type="journal article" date="2005" name="Science">
        <title>The transcriptional landscape of the mammalian genome.</title>
        <authorList>
            <person name="Carninci P."/>
            <person name="Kasukawa T."/>
            <person name="Katayama S."/>
            <person name="Gough J."/>
            <person name="Frith M.C."/>
            <person name="Maeda N."/>
            <person name="Oyama R."/>
            <person name="Ravasi T."/>
            <person name="Lenhard B."/>
            <person name="Wells C."/>
            <person name="Kodzius R."/>
            <person name="Shimokawa K."/>
            <person name="Bajic V.B."/>
            <person name="Brenner S.E."/>
            <person name="Batalov S."/>
            <person name="Forrest A.R."/>
            <person name="Zavolan M."/>
            <person name="Davis M.J."/>
            <person name="Wilming L.G."/>
            <person name="Aidinis V."/>
            <person name="Allen J.E."/>
            <person name="Ambesi-Impiombato A."/>
            <person name="Apweiler R."/>
            <person name="Aturaliya R.N."/>
            <person name="Bailey T.L."/>
            <person name="Bansal M."/>
            <person name="Baxter L."/>
            <person name="Beisel K.W."/>
            <person name="Bersano T."/>
            <person name="Bono H."/>
            <person name="Chalk A.M."/>
            <person name="Chiu K.P."/>
            <person name="Choudhary V."/>
            <person name="Christoffels A."/>
            <person name="Clutterbuck D.R."/>
            <person name="Crowe M.L."/>
            <person name="Dalla E."/>
            <person name="Dalrymple B.P."/>
            <person name="de Bono B."/>
            <person name="Della Gatta G."/>
            <person name="di Bernardo D."/>
            <person name="Down T."/>
            <person name="Engstrom P."/>
            <person name="Fagiolini M."/>
            <person name="Faulkner G."/>
            <person name="Fletcher C.F."/>
            <person name="Fukushima T."/>
            <person name="Furuno M."/>
            <person name="Futaki S."/>
            <person name="Gariboldi M."/>
            <person name="Georgii-Hemming P."/>
            <person name="Gingeras T.R."/>
            <person name="Gojobori T."/>
            <person name="Green R.E."/>
            <person name="Gustincich S."/>
            <person name="Harbers M."/>
            <person name="Hayashi Y."/>
            <person name="Hensch T.K."/>
            <person name="Hirokawa N."/>
            <person name="Hill D."/>
            <person name="Huminiecki L."/>
            <person name="Iacono M."/>
            <person name="Ikeo K."/>
            <person name="Iwama A."/>
            <person name="Ishikawa T."/>
            <person name="Jakt M."/>
            <person name="Kanapin A."/>
            <person name="Katoh M."/>
            <person name="Kawasawa Y."/>
            <person name="Kelso J."/>
            <person name="Kitamura H."/>
            <person name="Kitano H."/>
            <person name="Kollias G."/>
            <person name="Krishnan S.P."/>
            <person name="Kruger A."/>
            <person name="Kummerfeld S.K."/>
            <person name="Kurochkin I.V."/>
            <person name="Lareau L.F."/>
            <person name="Lazarevic D."/>
            <person name="Lipovich L."/>
            <person name="Liu J."/>
            <person name="Liuni S."/>
            <person name="McWilliam S."/>
            <person name="Madan Babu M."/>
            <person name="Madera M."/>
            <person name="Marchionni L."/>
            <person name="Matsuda H."/>
            <person name="Matsuzawa S."/>
            <person name="Miki H."/>
            <person name="Mignone F."/>
            <person name="Miyake S."/>
            <person name="Morris K."/>
            <person name="Mottagui-Tabar S."/>
            <person name="Mulder N."/>
            <person name="Nakano N."/>
            <person name="Nakauchi H."/>
            <person name="Ng P."/>
            <person name="Nilsson R."/>
            <person name="Nishiguchi S."/>
            <person name="Nishikawa S."/>
            <person name="Nori F."/>
            <person name="Ohara O."/>
            <person name="Okazaki Y."/>
            <person name="Orlando V."/>
            <person name="Pang K.C."/>
            <person name="Pavan W.J."/>
            <person name="Pavesi G."/>
            <person name="Pesole G."/>
            <person name="Petrovsky N."/>
            <person name="Piazza S."/>
            <person name="Reed J."/>
            <person name="Reid J.F."/>
            <person name="Ring B.Z."/>
            <person name="Ringwald M."/>
            <person name="Rost B."/>
            <person name="Ruan Y."/>
            <person name="Salzberg S.L."/>
            <person name="Sandelin A."/>
            <person name="Schneider C."/>
            <person name="Schoenbach C."/>
            <person name="Sekiguchi K."/>
            <person name="Semple C.A."/>
            <person name="Seno S."/>
            <person name="Sessa L."/>
            <person name="Sheng Y."/>
            <person name="Shibata Y."/>
            <person name="Shimada H."/>
            <person name="Shimada K."/>
            <person name="Silva D."/>
            <person name="Sinclair B."/>
            <person name="Sperling S."/>
            <person name="Stupka E."/>
            <person name="Sugiura K."/>
            <person name="Sultana R."/>
            <person name="Takenaka Y."/>
            <person name="Taki K."/>
            <person name="Tammoja K."/>
            <person name="Tan S.L."/>
            <person name="Tang S."/>
            <person name="Taylor M.S."/>
            <person name="Tegner J."/>
            <person name="Teichmann S.A."/>
            <person name="Ueda H.R."/>
            <person name="van Nimwegen E."/>
            <person name="Verardo R."/>
            <person name="Wei C.L."/>
            <person name="Yagi K."/>
            <person name="Yamanishi H."/>
            <person name="Zabarovsky E."/>
            <person name="Zhu S."/>
            <person name="Zimmer A."/>
            <person name="Hide W."/>
            <person name="Bult C."/>
            <person name="Grimmond S.M."/>
            <person name="Teasdale R.D."/>
            <person name="Liu E.T."/>
            <person name="Brusic V."/>
            <person name="Quackenbush J."/>
            <person name="Wahlestedt C."/>
            <person name="Mattick J.S."/>
            <person name="Hume D.A."/>
            <person name="Kai C."/>
            <person name="Sasaki D."/>
            <person name="Tomaru Y."/>
            <person name="Fukuda S."/>
            <person name="Kanamori-Katayama M."/>
            <person name="Suzuki M."/>
            <person name="Aoki J."/>
            <person name="Arakawa T."/>
            <person name="Iida J."/>
            <person name="Imamura K."/>
            <person name="Itoh M."/>
            <person name="Kato T."/>
            <person name="Kawaji H."/>
            <person name="Kawagashira N."/>
            <person name="Kawashima T."/>
            <person name="Kojima M."/>
            <person name="Kondo S."/>
            <person name="Konno H."/>
            <person name="Nakano K."/>
            <person name="Ninomiya N."/>
            <person name="Nishio T."/>
            <person name="Okada M."/>
            <person name="Plessy C."/>
            <person name="Shibata K."/>
            <person name="Shiraki T."/>
            <person name="Suzuki S."/>
            <person name="Tagami M."/>
            <person name="Waki K."/>
            <person name="Watahiki A."/>
            <person name="Okamura-Oho Y."/>
            <person name="Suzuki H."/>
            <person name="Kawai J."/>
            <person name="Hayashizaki Y."/>
        </authorList>
    </citation>
    <scope>NUCLEOTIDE SEQUENCE [LARGE SCALE MRNA] (ISOFORM 2)</scope>
    <source>
        <strain>C57BL/6J</strain>
        <tissue>Stomach</tissue>
    </source>
</reference>
<reference key="3">
    <citation type="journal article" date="2009" name="PLoS Biol.">
        <title>Lineage-specific biology revealed by a finished genome assembly of the mouse.</title>
        <authorList>
            <person name="Church D.M."/>
            <person name="Goodstadt L."/>
            <person name="Hillier L.W."/>
            <person name="Zody M.C."/>
            <person name="Goldstein S."/>
            <person name="She X."/>
            <person name="Bult C.J."/>
            <person name="Agarwala R."/>
            <person name="Cherry J.L."/>
            <person name="DiCuccio M."/>
            <person name="Hlavina W."/>
            <person name="Kapustin Y."/>
            <person name="Meric P."/>
            <person name="Maglott D."/>
            <person name="Birtle Z."/>
            <person name="Marques A.C."/>
            <person name="Graves T."/>
            <person name="Zhou S."/>
            <person name="Teague B."/>
            <person name="Potamousis K."/>
            <person name="Churas C."/>
            <person name="Place M."/>
            <person name="Herschleb J."/>
            <person name="Runnheim R."/>
            <person name="Forrest D."/>
            <person name="Amos-Landgraf J."/>
            <person name="Schwartz D.C."/>
            <person name="Cheng Z."/>
            <person name="Lindblad-Toh K."/>
            <person name="Eichler E.E."/>
            <person name="Ponting C.P."/>
        </authorList>
    </citation>
    <scope>NUCLEOTIDE SEQUENCE [LARGE SCALE GENOMIC DNA]</scope>
    <source>
        <strain>C57BL/6J</strain>
    </source>
</reference>
<reference key="4">
    <citation type="journal article" date="1995" name="Nature">
        <title>Ca(2+)-dependent and -independent activities of neural and non-neural synaptotagmins.</title>
        <authorList>
            <person name="Li C."/>
            <person name="Ullrich B."/>
            <person name="Zhang J.Z."/>
            <person name="Anderson R.G.W."/>
            <person name="Brose N."/>
            <person name="Suedhof T.C."/>
        </authorList>
    </citation>
    <scope>NUCLEOTIDE SEQUENCE [GENOMIC DNA / MRNA] OF 41-395 (ISOFORM 1)</scope>
    <scope>FUNCTION</scope>
    <scope>INTERACTION WITH AP2</scope>
    <source>
        <strain>129/Sv</strain>
        <tissue>Embryo</tissue>
    </source>
</reference>
<reference key="5">
    <citation type="journal article" date="1998" name="J. Biol. Chem.">
        <title>Inositol 1,3,4,5-tetrakisphosphate binding activities of neuronal and non-neuronal synaptotagmins. Identification of conserved amino acid substitutions that abolish inositol 1,3,4,5-tetrakisphosphate binding to synaptotagmins III, V, and X.</title>
        <authorList>
            <person name="Ibata K."/>
            <person name="Fukuda M."/>
            <person name="Mikoshiba K."/>
        </authorList>
    </citation>
    <scope>INTERACTION WITH INOSITOL 1,3,4,5-TETRAKISPHOSPHATE</scope>
</reference>
<reference key="6">
    <citation type="journal article" date="2000" name="J. Biochem.">
        <title>Calcium-dependent and -independent hetero-oligomerization in the synaptotagmin family.</title>
        <authorList>
            <person name="Fukuda M."/>
            <person name="Mikoshiba K."/>
        </authorList>
    </citation>
    <scope>MEMBRANE TOPOLOGY</scope>
    <scope>OLIGOMERIZATION</scope>
</reference>
<reference key="7">
    <citation type="journal article" date="2000" name="J. Biol. Chem.">
        <title>SYNCRIP, a cytoplasmic counterpart of heterogeneous nuclear ribonucleoprotein R, interacts with ubiquitous synaptotagmin isoforms.</title>
        <authorList>
            <person name="Mizutani A."/>
            <person name="Fukuda M."/>
            <person name="Ibata K."/>
            <person name="Shiraishi Y."/>
            <person name="Mikoshiba K."/>
        </authorList>
    </citation>
    <scope>INTERACTION WITH SYNCRIP</scope>
</reference>
<reference key="8">
    <citation type="journal article" date="2002" name="Biol. Reprod.">
        <title>Synaptotagmin VIII is localized to the mouse sperm head and may function in acrosomal exocytosis.</title>
        <authorList>
            <person name="Hutt D.M."/>
            <person name="Cardullo R.A."/>
            <person name="Baltz J.M."/>
            <person name="Ngsee J.K."/>
        </authorList>
    </citation>
    <scope>FUNCTION</scope>
    <scope>SUBCELLULAR LOCATION</scope>
    <scope>TISSUE SPECIFICITY</scope>
</reference>
<reference key="9">
    <citation type="journal article" date="2005" name="J. Biol. Chem.">
        <title>Synaptotagmin VI and VIII and syntaxin 2 are essential for the mouse sperm acrosome reaction.</title>
        <authorList>
            <person name="Hutt D.M."/>
            <person name="Baltz J.M."/>
            <person name="Ngsee J.K."/>
        </authorList>
    </citation>
    <scope>FUNCTION</scope>
    <scope>INTERACTION WITH STX1A; STX1B AND STX2</scope>
</reference>
<reference key="10">
    <citation type="journal article" date="2006" name="Biochim. Biophys. Acta">
        <title>Synaptotagmin 8 is expressed both as a calcium-insensitive soluble and membrane protein in neurons, neuroendocrine and endocrine cells.</title>
        <authorList>
            <person name="Monterrat C."/>
            <person name="Boal F."/>
            <person name="Grise F."/>
            <person name="Hemar A."/>
            <person name="Lang J."/>
        </authorList>
    </citation>
    <scope>SUBCELLULAR LOCATION</scope>
    <scope>TISSUE SPECIFICITY</scope>
</reference>
<name>SYT8_MOUSE</name>
<proteinExistence type="evidence at protein level"/>
<feature type="chain" id="PRO_0000183960" description="Synaptotagmin-8">
    <location>
        <begin position="1"/>
        <end position="395"/>
    </location>
</feature>
<feature type="topological domain" description="Extracellular" evidence="1">
    <location>
        <begin position="1"/>
        <end position="44"/>
    </location>
</feature>
<feature type="transmembrane region" description="Helical; Signal-anchor for type III membrane protein" evidence="1">
    <location>
        <begin position="45"/>
        <end position="65"/>
    </location>
</feature>
<feature type="topological domain" description="Cytoplasmic" evidence="1">
    <location>
        <begin position="66"/>
        <end position="395"/>
    </location>
</feature>
<feature type="domain" description="C2 1" evidence="2">
    <location>
        <begin position="113"/>
        <end position="229"/>
    </location>
</feature>
<feature type="domain" description="C2 2" evidence="2">
    <location>
        <begin position="241"/>
        <end position="370"/>
    </location>
</feature>
<feature type="splice variant" id="VSP_009028" description="In isoform 2." evidence="9">
    <location>
        <begin position="1"/>
        <end position="6"/>
    </location>
</feature>
<feature type="splice variant" id="VSP_009029" description="In isoform 2." evidence="9">
    <original>W</original>
    <variation>SCAPGLG</variation>
    <location>
        <position position="40"/>
    </location>
</feature>
<gene>
    <name type="primary">Syt8</name>
</gene>
<keyword id="KW-0025">Alternative splicing</keyword>
<keyword id="KW-1003">Cell membrane</keyword>
<keyword id="KW-0963">Cytoplasm</keyword>
<keyword id="KW-0968">Cytoplasmic vesicle</keyword>
<keyword id="KW-0472">Membrane</keyword>
<keyword id="KW-1185">Reference proteome</keyword>
<keyword id="KW-0677">Repeat</keyword>
<keyword id="KW-0735">Signal-anchor</keyword>
<keyword id="KW-0812">Transmembrane</keyword>
<keyword id="KW-1133">Transmembrane helix</keyword>
<organism>
    <name type="scientific">Mus musculus</name>
    <name type="common">Mouse</name>
    <dbReference type="NCBI Taxonomy" id="10090"/>
    <lineage>
        <taxon>Eukaryota</taxon>
        <taxon>Metazoa</taxon>
        <taxon>Chordata</taxon>
        <taxon>Craniata</taxon>
        <taxon>Vertebrata</taxon>
        <taxon>Euteleostomi</taxon>
        <taxon>Mammalia</taxon>
        <taxon>Eutheria</taxon>
        <taxon>Euarchontoglires</taxon>
        <taxon>Glires</taxon>
        <taxon>Rodentia</taxon>
        <taxon>Myomorpha</taxon>
        <taxon>Muroidea</taxon>
        <taxon>Muridae</taxon>
        <taxon>Murinae</taxon>
        <taxon>Mus</taxon>
        <taxon>Mus</taxon>
    </lineage>
</organism>
<protein>
    <recommendedName>
        <fullName>Synaptotagmin-8</fullName>
    </recommendedName>
    <alternativeName>
        <fullName>Synaptotagmin VIII</fullName>
        <shortName>SytVIII</shortName>
    </alternativeName>
</protein>
<sequence>MQADRSMKMGHALNPFSTSAPLDATAGPSLIPDLITRIPWPRWTLFIAILAAGVLLVSCLLCVICCYCHRHRHRKQPKDKETVGLGSARNSTTTHLVQPDVDCLEPCSGGDQQWGRLLLSLEYDFGSQEIRVGLRQAGNLKAEGTADPYAWVSVSTQSGRRHETKVHRGTLSPMFEETCCFLVPPAELPKATLKVQLWDFKRFSEHEPLGELQLPLGTVDLQHVLESWYQLGPPGTTEPEQMGELCFSLRYVPSSGSLTVVVLEARGLNPGLAEAYVKIQLMLNQRKWKKSKTSSKKGTTTPYFNEAFVFLVPVSQLQSVDLVLAVWARGLQLRTEPVGKVLLGSRASGQPLQHWADMLAHARRPIAQWHHLRSPREVDRVLALQPRLPLLRPRS</sequence>
<accession>Q9R0N6</accession>
<accession>A9JAL0</accession>
<accession>Q64366</accession>
<accession>Q8C6E7</accession>
<dbReference type="EMBL" id="AB026805">
    <property type="protein sequence ID" value="BAA85777.1"/>
    <property type="molecule type" value="mRNA"/>
</dbReference>
<dbReference type="EMBL" id="AK075832">
    <property type="protein sequence ID" value="BAC35993.1"/>
    <property type="molecule type" value="mRNA"/>
</dbReference>
<dbReference type="EMBL" id="AL603651">
    <property type="status" value="NOT_ANNOTATED_CDS"/>
    <property type="molecule type" value="Genomic_DNA"/>
</dbReference>
<dbReference type="EMBL" id="U20107">
    <property type="protein sequence ID" value="AAA87723.1"/>
    <property type="molecule type" value="mRNA"/>
</dbReference>
<dbReference type="EMBL" id="U20109">
    <property type="protein sequence ID" value="AAA87727.1"/>
    <property type="molecule type" value="Genomic_DNA"/>
</dbReference>
<dbReference type="CCDS" id="CCDS22030.1">
    <molecule id="Q9R0N6-2"/>
</dbReference>
<dbReference type="CCDS" id="CCDS72070.1">
    <molecule id="Q9R0N6-1"/>
</dbReference>
<dbReference type="PIR" id="S58401">
    <property type="entry name" value="S58401"/>
</dbReference>
<dbReference type="RefSeq" id="NP_001272786.1">
    <property type="nucleotide sequence ID" value="NM_001285857.1"/>
</dbReference>
<dbReference type="RefSeq" id="NP_001272787.1">
    <property type="nucleotide sequence ID" value="NM_001285858.1"/>
</dbReference>
<dbReference type="RefSeq" id="NP_001272790.1">
    <molecule id="Q9R0N6-1"/>
    <property type="nucleotide sequence ID" value="NM_001285861.1"/>
</dbReference>
<dbReference type="RefSeq" id="NP_061272.2">
    <molecule id="Q9R0N6-2"/>
    <property type="nucleotide sequence ID" value="NM_018802.5"/>
</dbReference>
<dbReference type="RefSeq" id="XP_011240318.1">
    <molecule id="Q9R0N6-1"/>
    <property type="nucleotide sequence ID" value="XM_011242016.4"/>
</dbReference>
<dbReference type="SMR" id="Q9R0N6"/>
<dbReference type="FunCoup" id="Q9R0N6">
    <property type="interactions" value="7"/>
</dbReference>
<dbReference type="STRING" id="10090.ENSMUSP00000113545"/>
<dbReference type="PhosphoSitePlus" id="Q9R0N6"/>
<dbReference type="PaxDb" id="10090-ENSMUSP00000113545"/>
<dbReference type="ProteomicsDB" id="253446">
    <molecule id="Q9R0N6-1"/>
</dbReference>
<dbReference type="ProteomicsDB" id="253447">
    <molecule id="Q9R0N6-2"/>
</dbReference>
<dbReference type="Antibodypedia" id="55775">
    <property type="antibodies" value="93 antibodies from 22 providers"/>
</dbReference>
<dbReference type="DNASU" id="55925"/>
<dbReference type="Ensembl" id="ENSMUST00000118276.8">
    <molecule id="Q9R0N6-2"/>
    <property type="protein sequence ID" value="ENSMUSP00000113545.2"/>
    <property type="gene ID" value="ENSMUSG00000031098.19"/>
</dbReference>
<dbReference type="Ensembl" id="ENSMUST00000122393.2">
    <molecule id="Q9R0N6-1"/>
    <property type="protein sequence ID" value="ENSMUSP00000112689.2"/>
    <property type="gene ID" value="ENSMUSG00000031098.19"/>
</dbReference>
<dbReference type="GeneID" id="55925"/>
<dbReference type="KEGG" id="mmu:55925"/>
<dbReference type="UCSC" id="uc009kmw.2">
    <molecule id="Q9R0N6-2"/>
    <property type="organism name" value="mouse"/>
</dbReference>
<dbReference type="UCSC" id="uc009kmx.2">
    <molecule id="Q9R0N6-1"/>
    <property type="organism name" value="mouse"/>
</dbReference>
<dbReference type="AGR" id="MGI:1859867"/>
<dbReference type="CTD" id="90019"/>
<dbReference type="MGI" id="MGI:1859867">
    <property type="gene designation" value="Syt8"/>
</dbReference>
<dbReference type="VEuPathDB" id="HostDB:ENSMUSG00000031098"/>
<dbReference type="eggNOG" id="KOG1028">
    <property type="taxonomic scope" value="Eukaryota"/>
</dbReference>
<dbReference type="GeneTree" id="ENSGT00940000160892"/>
<dbReference type="InParanoid" id="Q9R0N6"/>
<dbReference type="OMA" id="ECWYQLG"/>
<dbReference type="PhylomeDB" id="Q9R0N6"/>
<dbReference type="TreeFam" id="TF315600"/>
<dbReference type="Reactome" id="R-MMU-8856825">
    <property type="pathway name" value="Cargo recognition for clathrin-mediated endocytosis"/>
</dbReference>
<dbReference type="Reactome" id="R-MMU-8856828">
    <property type="pathway name" value="Clathrin-mediated endocytosis"/>
</dbReference>
<dbReference type="BioGRID-ORCS" id="55925">
    <property type="hits" value="3 hits in 78 CRISPR screens"/>
</dbReference>
<dbReference type="PRO" id="PR:Q9R0N6"/>
<dbReference type="Proteomes" id="UP000000589">
    <property type="component" value="Chromosome 7"/>
</dbReference>
<dbReference type="RNAct" id="Q9R0N6">
    <property type="molecule type" value="protein"/>
</dbReference>
<dbReference type="Bgee" id="ENSMUSG00000031098">
    <property type="expression patterns" value="Expressed in urinary bladder urothelium and 49 other cell types or tissues"/>
</dbReference>
<dbReference type="ExpressionAtlas" id="Q9R0N6">
    <property type="expression patterns" value="baseline and differential"/>
</dbReference>
<dbReference type="GO" id="GO:0001669">
    <property type="term" value="C:acrosomal vesicle"/>
    <property type="evidence" value="ECO:0007669"/>
    <property type="project" value="UniProtKB-SubCell"/>
</dbReference>
<dbReference type="GO" id="GO:0005737">
    <property type="term" value="C:cytoplasm"/>
    <property type="evidence" value="ECO:0000314"/>
    <property type="project" value="MGI"/>
</dbReference>
<dbReference type="GO" id="GO:0005886">
    <property type="term" value="C:plasma membrane"/>
    <property type="evidence" value="ECO:0007669"/>
    <property type="project" value="UniProtKB-SubCell"/>
</dbReference>
<dbReference type="GO" id="GO:0031982">
    <property type="term" value="C:vesicle"/>
    <property type="evidence" value="ECO:0000314"/>
    <property type="project" value="MGI"/>
</dbReference>
<dbReference type="GO" id="GO:0048306">
    <property type="term" value="F:calcium-dependent protein binding"/>
    <property type="evidence" value="ECO:0000353"/>
    <property type="project" value="UniProtKB"/>
</dbReference>
<dbReference type="GO" id="GO:0007340">
    <property type="term" value="P:acrosome reaction"/>
    <property type="evidence" value="ECO:0000314"/>
    <property type="project" value="HGNC-UCL"/>
</dbReference>
<dbReference type="FunFam" id="2.60.40.150:FF:000176">
    <property type="entry name" value="Synaptotagmin 8"/>
    <property type="match status" value="1"/>
</dbReference>
<dbReference type="FunFam" id="2.60.40.150:FF:000182">
    <property type="entry name" value="Synaptotagmin 8"/>
    <property type="match status" value="1"/>
</dbReference>
<dbReference type="Gene3D" id="2.60.40.150">
    <property type="entry name" value="C2 domain"/>
    <property type="match status" value="2"/>
</dbReference>
<dbReference type="InterPro" id="IPR000008">
    <property type="entry name" value="C2_dom"/>
</dbReference>
<dbReference type="InterPro" id="IPR035892">
    <property type="entry name" value="C2_domain_sf"/>
</dbReference>
<dbReference type="InterPro" id="IPR001565">
    <property type="entry name" value="Synaptotagmin"/>
</dbReference>
<dbReference type="PANTHER" id="PTHR10024">
    <property type="entry name" value="SYNAPTOTAGMIN"/>
    <property type="match status" value="1"/>
</dbReference>
<dbReference type="PANTHER" id="PTHR10024:SF249">
    <property type="entry name" value="SYNAPTOTAGMIN-8"/>
    <property type="match status" value="1"/>
</dbReference>
<dbReference type="Pfam" id="PF00168">
    <property type="entry name" value="C2"/>
    <property type="match status" value="2"/>
</dbReference>
<dbReference type="PRINTS" id="PR00399">
    <property type="entry name" value="SYNAPTOTAGMN"/>
</dbReference>
<dbReference type="SMART" id="SM00239">
    <property type="entry name" value="C2"/>
    <property type="match status" value="2"/>
</dbReference>
<dbReference type="SUPFAM" id="SSF49562">
    <property type="entry name" value="C2 domain (Calcium/lipid-binding domain, CaLB)"/>
    <property type="match status" value="2"/>
</dbReference>
<dbReference type="PROSITE" id="PS50004">
    <property type="entry name" value="C2"/>
    <property type="match status" value="2"/>
</dbReference>